<sequence length="83" mass="9192">MSSGGLLLLLGLLTLWEALTPVSSTDRPEFCELPEDSGPCKGLFHVFYYNSDQNQCLEFIYGGCYGNANNFKTIEECKRTCAA</sequence>
<evidence type="ECO:0000250" key="1"/>
<evidence type="ECO:0000255" key="2"/>
<evidence type="ECO:0000255" key="3">
    <source>
        <dbReference type="PROSITE-ProRule" id="PRU00031"/>
    </source>
</evidence>
<evidence type="ECO:0000305" key="4"/>
<feature type="signal peptide" evidence="2">
    <location>
        <begin position="1"/>
        <end position="24"/>
    </location>
</feature>
<feature type="chain" id="PRO_5000395577" description="Kunitz-type serine protease inhibitor nigrescinin-1">
    <location>
        <begin position="25"/>
        <end position="83"/>
    </location>
</feature>
<feature type="domain" description="BPTI/Kunitz inhibitor" evidence="3">
    <location>
        <begin position="31"/>
        <end position="81"/>
    </location>
</feature>
<feature type="site" description="Reactive bond for trypsin" evidence="1">
    <location>
        <begin position="41"/>
        <end position="42"/>
    </location>
</feature>
<feature type="disulfide bond" evidence="3">
    <location>
        <begin position="40"/>
        <end position="64"/>
    </location>
</feature>
<feature type="disulfide bond" evidence="3">
    <location>
        <begin position="56"/>
        <end position="77"/>
    </location>
</feature>
<dbReference type="EMBL" id="EF025516">
    <property type="protein sequence ID" value="ABM86988.1"/>
    <property type="molecule type" value="mRNA"/>
</dbReference>
<dbReference type="EMBL" id="EU401850">
    <property type="protein sequence ID" value="ACC77799.1"/>
    <property type="molecule type" value="Genomic_DNA"/>
</dbReference>
<dbReference type="SMR" id="B5KF95"/>
<dbReference type="MEROPS" id="I02.052"/>
<dbReference type="GO" id="GO:0005615">
    <property type="term" value="C:extracellular space"/>
    <property type="evidence" value="ECO:0007669"/>
    <property type="project" value="TreeGrafter"/>
</dbReference>
<dbReference type="GO" id="GO:0004867">
    <property type="term" value="F:serine-type endopeptidase inhibitor activity"/>
    <property type="evidence" value="ECO:0007669"/>
    <property type="project" value="UniProtKB-KW"/>
</dbReference>
<dbReference type="CDD" id="cd22594">
    <property type="entry name" value="Kunitz_textilinin-like"/>
    <property type="match status" value="1"/>
</dbReference>
<dbReference type="FunFam" id="4.10.410.10:FF:000021">
    <property type="entry name" value="Serine protease inhibitor, putative"/>
    <property type="match status" value="1"/>
</dbReference>
<dbReference type="Gene3D" id="4.10.410.10">
    <property type="entry name" value="Pancreatic trypsin inhibitor Kunitz domain"/>
    <property type="match status" value="1"/>
</dbReference>
<dbReference type="InterPro" id="IPR002223">
    <property type="entry name" value="Kunitz_BPTI"/>
</dbReference>
<dbReference type="InterPro" id="IPR036880">
    <property type="entry name" value="Kunitz_BPTI_sf"/>
</dbReference>
<dbReference type="InterPro" id="IPR020901">
    <property type="entry name" value="Prtase_inh_Kunz-CS"/>
</dbReference>
<dbReference type="InterPro" id="IPR050098">
    <property type="entry name" value="TFPI/VKTCI-like"/>
</dbReference>
<dbReference type="PANTHER" id="PTHR10083:SF374">
    <property type="entry name" value="BPTI_KUNITZ INHIBITOR DOMAIN-CONTAINING PROTEIN"/>
    <property type="match status" value="1"/>
</dbReference>
<dbReference type="PANTHER" id="PTHR10083">
    <property type="entry name" value="KUNITZ-TYPE PROTEASE INHIBITOR-RELATED"/>
    <property type="match status" value="1"/>
</dbReference>
<dbReference type="Pfam" id="PF00014">
    <property type="entry name" value="Kunitz_BPTI"/>
    <property type="match status" value="1"/>
</dbReference>
<dbReference type="PRINTS" id="PR00759">
    <property type="entry name" value="BASICPTASE"/>
</dbReference>
<dbReference type="SMART" id="SM00131">
    <property type="entry name" value="KU"/>
    <property type="match status" value="1"/>
</dbReference>
<dbReference type="SUPFAM" id="SSF57362">
    <property type="entry name" value="BPTI-like"/>
    <property type="match status" value="1"/>
</dbReference>
<dbReference type="PROSITE" id="PS00280">
    <property type="entry name" value="BPTI_KUNITZ_1"/>
    <property type="match status" value="1"/>
</dbReference>
<dbReference type="PROSITE" id="PS50279">
    <property type="entry name" value="BPTI_KUNITZ_2"/>
    <property type="match status" value="1"/>
</dbReference>
<accession>B5KF95</accession>
<protein>
    <recommendedName>
        <fullName>Kunitz-type serine protease inhibitor nigrescinin-1</fullName>
    </recommendedName>
</protein>
<reference key="1">
    <citation type="journal article" date="2008" name="Cell. Mol. Life Sci.">
        <title>Common evolution of waprin and Kunitz-like toxin families in Australian venomous snakes.</title>
        <authorList>
            <person name="St Pierre L."/>
            <person name="Earl S.T."/>
            <person name="Filippovich I."/>
            <person name="Sorokina N."/>
            <person name="Masci P.P."/>
            <person name="De Jersey J."/>
            <person name="Lavin M.F."/>
        </authorList>
    </citation>
    <scope>NUCLEOTIDE SEQUENCE [GENOMIC DNA / MRNA]</scope>
    <source>
        <tissue>Venom gland</tissue>
    </source>
</reference>
<proteinExistence type="evidence at transcript level"/>
<organism>
    <name type="scientific">Cryptophis nigrescens</name>
    <name type="common">Eastern small-eyed snake</name>
    <name type="synonym">Rhinoplocephalus nigrescens</name>
    <dbReference type="NCBI Taxonomy" id="292442"/>
    <lineage>
        <taxon>Eukaryota</taxon>
        <taxon>Metazoa</taxon>
        <taxon>Chordata</taxon>
        <taxon>Craniata</taxon>
        <taxon>Vertebrata</taxon>
        <taxon>Euteleostomi</taxon>
        <taxon>Lepidosauria</taxon>
        <taxon>Squamata</taxon>
        <taxon>Bifurcata</taxon>
        <taxon>Unidentata</taxon>
        <taxon>Episquamata</taxon>
        <taxon>Toxicofera</taxon>
        <taxon>Serpentes</taxon>
        <taxon>Colubroidea</taxon>
        <taxon>Elapidae</taxon>
        <taxon>Hydrophiinae</taxon>
        <taxon>Cryptophis</taxon>
    </lineage>
</organism>
<keyword id="KW-1015">Disulfide bond</keyword>
<keyword id="KW-0646">Protease inhibitor</keyword>
<keyword id="KW-0964">Secreted</keyword>
<keyword id="KW-0722">Serine protease inhibitor</keyword>
<keyword id="KW-0732">Signal</keyword>
<comment type="function">
    <text evidence="1">Serine protease inhibitor.</text>
</comment>
<comment type="subcellular location">
    <subcellularLocation>
        <location evidence="1">Secreted</location>
    </subcellularLocation>
</comment>
<comment type="tissue specificity">
    <text>Expressed by the venom gland.</text>
</comment>
<comment type="similarity">
    <text evidence="4">Belongs to the venom Kunitz-type family.</text>
</comment>
<name>VKT1_CRYNI</name>